<accession>Q9SEU4</accession>
<accession>C0Z312</accession>
<accession>F4I090</accession>
<accession>F4I092</accession>
<accession>Q949P4</accession>
<accession>Q9C8A1</accession>
<organism>
    <name type="scientific">Arabidopsis thaliana</name>
    <name type="common">Mouse-ear cress</name>
    <dbReference type="NCBI Taxonomy" id="3702"/>
    <lineage>
        <taxon>Eukaryota</taxon>
        <taxon>Viridiplantae</taxon>
        <taxon>Streptophyta</taxon>
        <taxon>Embryophyta</taxon>
        <taxon>Tracheophyta</taxon>
        <taxon>Spermatophyta</taxon>
        <taxon>Magnoliopsida</taxon>
        <taxon>eudicotyledons</taxon>
        <taxon>Gunneridae</taxon>
        <taxon>Pentapetalae</taxon>
        <taxon>rosids</taxon>
        <taxon>malvids</taxon>
        <taxon>Brassicales</taxon>
        <taxon>Brassicaceae</taxon>
        <taxon>Camelineae</taxon>
        <taxon>Arabidopsis</taxon>
    </lineage>
</organism>
<reference key="1">
    <citation type="journal article" date="1999" name="J. Biol. Chem.">
        <title>An SC35-like protein and a novel serine/arginine-rich protein interact with Arabidopsis U1-70K protein.</title>
        <authorList>
            <person name="Golovkin M."/>
            <person name="Reddy A.S.N."/>
        </authorList>
    </citation>
    <scope>NUCLEOTIDE SEQUENCE [MRNA] (ISOFORM 1)</scope>
    <scope>INTERACTION WITH AFC2; RNU1 AND SR45</scope>
    <scope>HOMODIMER</scope>
    <scope>PHOSPHORYLATION BY AFC2</scope>
    <scope>ALTERNATIVE SPLICING</scope>
    <scope>TISSUE SPECIFICITY</scope>
</reference>
<reference key="2">
    <citation type="journal article" date="2002" name="J. Biol. Chem.">
        <title>Network of interactions of a novel plant-specific Arg/Ser-rich protein, atRSZ33, with atSC35-like splicing factors.</title>
        <authorList>
            <person name="Lopato S."/>
            <person name="Forstner C."/>
            <person name="Kalyna M."/>
            <person name="Hilscher J."/>
            <person name="Langhammer U."/>
            <person name="Korakod L."/>
            <person name="Zdravko J."/>
            <person name="Barta A."/>
        </authorList>
    </citation>
    <scope>NUCLEOTIDE SEQUENCE [MRNA] (ISOFORM 1)</scope>
    <scope>INTERACTION WITH RS2Z33</scope>
</reference>
<reference key="3">
    <citation type="journal article" date="2000" name="Nature">
        <title>Sequence and analysis of chromosome 1 of the plant Arabidopsis thaliana.</title>
        <authorList>
            <person name="Theologis A."/>
            <person name="Ecker J.R."/>
            <person name="Palm C.J."/>
            <person name="Federspiel N.A."/>
            <person name="Kaul S."/>
            <person name="White O."/>
            <person name="Alonso J."/>
            <person name="Altafi H."/>
            <person name="Araujo R."/>
            <person name="Bowman C.L."/>
            <person name="Brooks S.Y."/>
            <person name="Buehler E."/>
            <person name="Chan A."/>
            <person name="Chao Q."/>
            <person name="Chen H."/>
            <person name="Cheuk R.F."/>
            <person name="Chin C.W."/>
            <person name="Chung M.K."/>
            <person name="Conn L."/>
            <person name="Conway A.B."/>
            <person name="Conway A.R."/>
            <person name="Creasy T.H."/>
            <person name="Dewar K."/>
            <person name="Dunn P."/>
            <person name="Etgu P."/>
            <person name="Feldblyum T.V."/>
            <person name="Feng J.-D."/>
            <person name="Fong B."/>
            <person name="Fujii C.Y."/>
            <person name="Gill J.E."/>
            <person name="Goldsmith A.D."/>
            <person name="Haas B."/>
            <person name="Hansen N.F."/>
            <person name="Hughes B."/>
            <person name="Huizar L."/>
            <person name="Hunter J.L."/>
            <person name="Jenkins J."/>
            <person name="Johnson-Hopson C."/>
            <person name="Khan S."/>
            <person name="Khaykin E."/>
            <person name="Kim C.J."/>
            <person name="Koo H.L."/>
            <person name="Kremenetskaia I."/>
            <person name="Kurtz D.B."/>
            <person name="Kwan A."/>
            <person name="Lam B."/>
            <person name="Langin-Hooper S."/>
            <person name="Lee A."/>
            <person name="Lee J.M."/>
            <person name="Lenz C.A."/>
            <person name="Li J.H."/>
            <person name="Li Y.-P."/>
            <person name="Lin X."/>
            <person name="Liu S.X."/>
            <person name="Liu Z.A."/>
            <person name="Luros J.S."/>
            <person name="Maiti R."/>
            <person name="Marziali A."/>
            <person name="Militscher J."/>
            <person name="Miranda M."/>
            <person name="Nguyen M."/>
            <person name="Nierman W.C."/>
            <person name="Osborne B.I."/>
            <person name="Pai G."/>
            <person name="Peterson J."/>
            <person name="Pham P.K."/>
            <person name="Rizzo M."/>
            <person name="Rooney T."/>
            <person name="Rowley D."/>
            <person name="Sakano H."/>
            <person name="Salzberg S.L."/>
            <person name="Schwartz J.R."/>
            <person name="Shinn P."/>
            <person name="Southwick A.M."/>
            <person name="Sun H."/>
            <person name="Tallon L.J."/>
            <person name="Tambunga G."/>
            <person name="Toriumi M.J."/>
            <person name="Town C.D."/>
            <person name="Utterback T."/>
            <person name="Van Aken S."/>
            <person name="Vaysberg M."/>
            <person name="Vysotskaia V.S."/>
            <person name="Walker M."/>
            <person name="Wu D."/>
            <person name="Yu G."/>
            <person name="Fraser C.M."/>
            <person name="Venter J.C."/>
            <person name="Davis R.W."/>
        </authorList>
    </citation>
    <scope>NUCLEOTIDE SEQUENCE [LARGE SCALE GENOMIC DNA]</scope>
    <source>
        <strain>cv. Columbia</strain>
    </source>
</reference>
<reference key="4">
    <citation type="journal article" date="2017" name="Plant J.">
        <title>Araport11: a complete reannotation of the Arabidopsis thaliana reference genome.</title>
        <authorList>
            <person name="Cheng C.Y."/>
            <person name="Krishnakumar V."/>
            <person name="Chan A.P."/>
            <person name="Thibaud-Nissen F."/>
            <person name="Schobel S."/>
            <person name="Town C.D."/>
        </authorList>
    </citation>
    <scope>GENOME REANNOTATION</scope>
    <source>
        <strain>cv. Columbia</strain>
    </source>
</reference>
<reference key="5">
    <citation type="journal article" date="2003" name="Science">
        <title>Empirical analysis of transcriptional activity in the Arabidopsis genome.</title>
        <authorList>
            <person name="Yamada K."/>
            <person name="Lim J."/>
            <person name="Dale J.M."/>
            <person name="Chen H."/>
            <person name="Shinn P."/>
            <person name="Palm C.J."/>
            <person name="Southwick A.M."/>
            <person name="Wu H.C."/>
            <person name="Kim C.J."/>
            <person name="Nguyen M."/>
            <person name="Pham P.K."/>
            <person name="Cheuk R.F."/>
            <person name="Karlin-Newmann G."/>
            <person name="Liu S.X."/>
            <person name="Lam B."/>
            <person name="Sakano H."/>
            <person name="Wu T."/>
            <person name="Yu G."/>
            <person name="Miranda M."/>
            <person name="Quach H.L."/>
            <person name="Tripp M."/>
            <person name="Chang C.H."/>
            <person name="Lee J.M."/>
            <person name="Toriumi M.J."/>
            <person name="Chan M.M."/>
            <person name="Tang C.C."/>
            <person name="Onodera C.S."/>
            <person name="Deng J.M."/>
            <person name="Akiyama K."/>
            <person name="Ansari Y."/>
            <person name="Arakawa T."/>
            <person name="Banh J."/>
            <person name="Banno F."/>
            <person name="Bowser L."/>
            <person name="Brooks S.Y."/>
            <person name="Carninci P."/>
            <person name="Chao Q."/>
            <person name="Choy N."/>
            <person name="Enju A."/>
            <person name="Goldsmith A.D."/>
            <person name="Gurjal M."/>
            <person name="Hansen N.F."/>
            <person name="Hayashizaki Y."/>
            <person name="Johnson-Hopson C."/>
            <person name="Hsuan V.W."/>
            <person name="Iida K."/>
            <person name="Karnes M."/>
            <person name="Khan S."/>
            <person name="Koesema E."/>
            <person name="Ishida J."/>
            <person name="Jiang P.X."/>
            <person name="Jones T."/>
            <person name="Kawai J."/>
            <person name="Kamiya A."/>
            <person name="Meyers C."/>
            <person name="Nakajima M."/>
            <person name="Narusaka M."/>
            <person name="Seki M."/>
            <person name="Sakurai T."/>
            <person name="Satou M."/>
            <person name="Tamse R."/>
            <person name="Vaysberg M."/>
            <person name="Wallender E.K."/>
            <person name="Wong C."/>
            <person name="Yamamura Y."/>
            <person name="Yuan S."/>
            <person name="Shinozaki K."/>
            <person name="Davis R.W."/>
            <person name="Theologis A."/>
            <person name="Ecker J.R."/>
        </authorList>
    </citation>
    <scope>NUCLEOTIDE SEQUENCE [LARGE SCALE MRNA] (ISOFORM 2)</scope>
    <source>
        <strain>cv. Columbia</strain>
    </source>
</reference>
<reference key="6">
    <citation type="submission" date="2004-12" db="EMBL/GenBank/DDBJ databases">
        <title>Arabidopsis ORF clones.</title>
        <authorList>
            <person name="Shinn P."/>
            <person name="Chen H."/>
            <person name="Cheuk R.F."/>
            <person name="Kim C.J."/>
            <person name="Ecker J.R."/>
        </authorList>
    </citation>
    <scope>NUCLEOTIDE SEQUENCE [LARGE SCALE MRNA] (ISOFORM 1)</scope>
    <source>
        <strain>cv. Columbia</strain>
    </source>
</reference>
<reference key="7">
    <citation type="journal article" date="2009" name="DNA Res.">
        <title>Analysis of multiple occurrences of alternative splicing events in Arabidopsis thaliana using novel sequenced full-length cDNAs.</title>
        <authorList>
            <person name="Iida K."/>
            <person name="Fukami-Kobayashi K."/>
            <person name="Toyoda A."/>
            <person name="Sakaki Y."/>
            <person name="Kobayashi M."/>
            <person name="Seki M."/>
            <person name="Shinozaki K."/>
        </authorList>
    </citation>
    <scope>NUCLEOTIDE SEQUENCE [LARGE SCALE MRNA] OF 85-287 (ISOFORM 1)</scope>
    <source>
        <strain>cv. Columbia</strain>
        <tissue>Rosette leaf</tissue>
    </source>
</reference>
<reference key="8">
    <citation type="journal article" date="2004" name="Biochem. Soc. Trans.">
        <title>A plethora of plant serine/arginine-rich proteins: redundancy or evolution of novel gene functions?</title>
        <authorList>
            <person name="Kalyna M."/>
            <person name="Barta A."/>
        </authorList>
    </citation>
    <scope>REVIEW</scope>
</reference>
<reference key="9">
    <citation type="journal article" date="2004" name="Mol. Biol. Cell">
        <title>Use of fluorescent protein tags to study nuclear organization of the spliceosomal machinery in transiently transformed living plant cells.</title>
        <authorList>
            <person name="Lorkovic Z.J."/>
            <person name="Hilscher J."/>
            <person name="Barta A."/>
        </authorList>
    </citation>
    <scope>SUBCELLULAR LOCATION</scope>
</reference>
<reference key="10">
    <citation type="journal article" date="2004" name="Mol. Biol. Cell">
        <title>Tissue-specific expression and dynamic organization of SR splicing factors in Arabidopsis.</title>
        <authorList>
            <person name="Fang Y."/>
            <person name="Hearn S."/>
            <person name="Spector D.L."/>
        </authorList>
    </citation>
    <scope>SUBCELLULAR LOCATION</scope>
    <scope>TISSUE SPECIFICITY</scope>
    <scope>DEVELOPMENTAL STAGE</scope>
    <source>
        <strain>cv. Columbia</strain>
    </source>
</reference>
<reference key="11">
    <citation type="journal article" date="2006" name="Mol. Biol. Evol.">
        <title>Survey of conserved alternative splicing events of mRNAs encoding SR proteins in land plants.</title>
        <authorList>
            <person name="Iida K."/>
            <person name="Go M."/>
        </authorList>
    </citation>
    <scope>ALTERNATIVE SPLICING</scope>
</reference>
<reference key="12">
    <citation type="journal article" date="2006" name="RNA">
        <title>AtCyp59 is a multidomain cyclophilin from Arabidopsis thaliana that interacts with SR proteins and the C-terminal domain of the RNA polymerase II.</title>
        <authorList>
            <person name="Gullerova M."/>
            <person name="Barta A."/>
            <person name="Lorkovic Z.J."/>
        </authorList>
    </citation>
    <scope>INTERACTION WITH CYP59</scope>
</reference>
<reference key="13">
    <citation type="journal article" date="2007" name="Plant J.">
        <title>Alternative splicing of pre-mRNAs of Arabidopsis serine/arginine-rich proteins: regulation by hormones and stresses.</title>
        <authorList>
            <person name="Palusa S.G."/>
            <person name="Ali G.S."/>
            <person name="Reddy A.S."/>
        </authorList>
    </citation>
    <scope>ALTERNATIVE SPLICING</scope>
    <scope>INDUCTION</scope>
</reference>
<reference key="14">
    <citation type="journal article" date="2008" name="BMC Genomics">
        <title>Alternative splicing at NAGNAG acceptors in Arabidopsis thaliana SR and SR-related protein-coding genes.</title>
        <authorList>
            <person name="Schindler S."/>
            <person name="Szafranski K."/>
            <person name="Hiller M."/>
            <person name="Ali G.S."/>
            <person name="Palusa S.G."/>
            <person name="Backofen R."/>
            <person name="Platzer M."/>
            <person name="Reddy A.S.N."/>
        </authorList>
    </citation>
    <scope>ALTERNATIVE SPLICING</scope>
</reference>
<reference key="15">
    <citation type="journal article" date="2010" name="Plant Cell">
        <title>Implementing a rational and consistent nomenclature for serine/arginine-rich protein splicing factors (SR proteins) in plants.</title>
        <authorList>
            <person name="Barta A."/>
            <person name="Kalyna M."/>
            <person name="Reddy A.S."/>
        </authorList>
    </citation>
    <scope>GENE FAMILY</scope>
    <scope>NOMENCLATURE</scope>
</reference>
<reference key="16">
    <citation type="journal article" date="2011" name="PLoS ONE">
        <title>Comparative analysis of serine/arginine-rich proteins across 27 eukaryotes: insights into sub-family classification and extent of alternative splicing.</title>
        <authorList>
            <person name="Richardson D.N."/>
            <person name="Rogers M.F."/>
            <person name="Labadorf A."/>
            <person name="Ben-Hur A."/>
            <person name="Guo H."/>
            <person name="Paterson A.H."/>
            <person name="Reddy A.S.N."/>
        </authorList>
    </citation>
    <scope>ALTERNATIVE SPLICING</scope>
    <scope>GENE FAMILY</scope>
</reference>
<reference key="17">
    <citation type="journal article" date="2012" name="Plant J.">
        <title>Identification of an intronic splicing regulatory element involved in auto-regulation of alternative splicing of SCL33 pre-mRNA.</title>
        <authorList>
            <person name="Thomas J."/>
            <person name="Palusa S.G."/>
            <person name="Prasad K.V."/>
            <person name="Ali G.S."/>
            <person name="Surabhi G.K."/>
            <person name="Ben-Hur A."/>
            <person name="Abdel-Ghany S.E."/>
            <person name="Reddy A.S."/>
        </authorList>
    </citation>
    <scope>FUNCTION</scope>
    <scope>ALTERNATIVE SPLICING</scope>
    <scope>DISRUPTION PHENOTYPE</scope>
</reference>
<name>SRC33_ARATH</name>
<proteinExistence type="evidence at protein level"/>
<evidence type="ECO:0000250" key="1">
    <source>
        <dbReference type="UniProtKB" id="Q8L3X8"/>
    </source>
</evidence>
<evidence type="ECO:0000250" key="2">
    <source>
        <dbReference type="UniProtKB" id="Q9FMG4"/>
    </source>
</evidence>
<evidence type="ECO:0000250" key="3">
    <source>
        <dbReference type="UniProtKB" id="Q9LHP2"/>
    </source>
</evidence>
<evidence type="ECO:0000255" key="4">
    <source>
        <dbReference type="PROSITE-ProRule" id="PRU00176"/>
    </source>
</evidence>
<evidence type="ECO:0000256" key="5">
    <source>
        <dbReference type="SAM" id="MobiDB-lite"/>
    </source>
</evidence>
<evidence type="ECO:0000269" key="6">
    <source>
    </source>
</evidence>
<evidence type="ECO:0000269" key="7">
    <source>
    </source>
</evidence>
<evidence type="ECO:0000269" key="8">
    <source>
    </source>
</evidence>
<evidence type="ECO:0000269" key="9">
    <source>
    </source>
</evidence>
<evidence type="ECO:0000269" key="10">
    <source>
    </source>
</evidence>
<evidence type="ECO:0000269" key="11">
    <source>
    </source>
</evidence>
<evidence type="ECO:0000303" key="12">
    <source>
    </source>
</evidence>
<evidence type="ECO:0000305" key="13"/>
<evidence type="ECO:0000305" key="14">
    <source>
    </source>
</evidence>
<dbReference type="EMBL" id="AF099940">
    <property type="protein sequence ID" value="AAF17288.1"/>
    <property type="molecule type" value="mRNA"/>
</dbReference>
<dbReference type="EMBL" id="AJ293799">
    <property type="protein sequence ID" value="CAC03603.1"/>
    <property type="molecule type" value="mRNA"/>
</dbReference>
<dbReference type="EMBL" id="AC027034">
    <property type="protein sequence ID" value="AAG51556.1"/>
    <property type="status" value="ALT_SEQ"/>
    <property type="molecule type" value="Genomic_DNA"/>
</dbReference>
<dbReference type="EMBL" id="CP002684">
    <property type="protein sequence ID" value="AEE33222.1"/>
    <property type="molecule type" value="Genomic_DNA"/>
</dbReference>
<dbReference type="EMBL" id="CP002684">
    <property type="protein sequence ID" value="AEE33223.1"/>
    <property type="molecule type" value="Genomic_DNA"/>
</dbReference>
<dbReference type="EMBL" id="CP002684">
    <property type="protein sequence ID" value="ANM58649.1"/>
    <property type="molecule type" value="Genomic_DNA"/>
</dbReference>
<dbReference type="EMBL" id="AY050974">
    <property type="protein sequence ID" value="AAK93651.1"/>
    <property type="molecule type" value="mRNA"/>
</dbReference>
<dbReference type="EMBL" id="BT020420">
    <property type="protein sequence ID" value="AAW28547.1"/>
    <property type="molecule type" value="mRNA"/>
</dbReference>
<dbReference type="EMBL" id="AK318976">
    <property type="protein sequence ID" value="BAH57091.1"/>
    <property type="molecule type" value="mRNA"/>
</dbReference>
<dbReference type="PIR" id="B96595">
    <property type="entry name" value="B96595"/>
</dbReference>
<dbReference type="PIR" id="T50647">
    <property type="entry name" value="T50647"/>
</dbReference>
<dbReference type="RefSeq" id="NP_001031195.4">
    <molecule id="Q9SEU4-4"/>
    <property type="nucleotide sequence ID" value="NM_001036118.4"/>
</dbReference>
<dbReference type="RefSeq" id="NP_001319238.1">
    <molecule id="Q9SEU4-4"/>
    <property type="nucleotide sequence ID" value="NM_001333699.1"/>
</dbReference>
<dbReference type="RefSeq" id="NP_001321067.1">
    <property type="nucleotide sequence ID" value="NM_001333701.1"/>
</dbReference>
<dbReference type="RefSeq" id="NP_564685.4">
    <molecule id="Q9SEU4-1"/>
    <property type="nucleotide sequence ID" value="NM_104406.6"/>
</dbReference>
<dbReference type="SMR" id="Q9SEU4"/>
<dbReference type="BioGRID" id="27201">
    <property type="interactions" value="10"/>
</dbReference>
<dbReference type="FunCoup" id="Q9SEU4">
    <property type="interactions" value="2956"/>
</dbReference>
<dbReference type="IntAct" id="Q9SEU4">
    <property type="interactions" value="8"/>
</dbReference>
<dbReference type="STRING" id="3702.Q9SEU4"/>
<dbReference type="iPTMnet" id="Q9SEU4"/>
<dbReference type="PaxDb" id="3702-AT1G55310.3"/>
<dbReference type="ProteomicsDB" id="226721">
    <molecule id="Q9SEU4-1"/>
</dbReference>
<dbReference type="EnsemblPlants" id="AT1G55310.1">
    <molecule id="Q9SEU4-1"/>
    <property type="protein sequence ID" value="AT1G55310.1"/>
    <property type="gene ID" value="AT1G55310"/>
</dbReference>
<dbReference type="EnsemblPlants" id="AT1G55310.2">
    <molecule id="Q9SEU4-4"/>
    <property type="protein sequence ID" value="AT1G55310.2"/>
    <property type="gene ID" value="AT1G55310"/>
</dbReference>
<dbReference type="EnsemblPlants" id="AT1G55310.5">
    <molecule id="Q9SEU4-4"/>
    <property type="protein sequence ID" value="AT1G55310.5"/>
    <property type="gene ID" value="AT1G55310"/>
</dbReference>
<dbReference type="GeneID" id="841976"/>
<dbReference type="Gramene" id="AT1G55310.1">
    <molecule id="Q9SEU4-1"/>
    <property type="protein sequence ID" value="AT1G55310.1"/>
    <property type="gene ID" value="AT1G55310"/>
</dbReference>
<dbReference type="Gramene" id="AT1G55310.2">
    <molecule id="Q9SEU4-4"/>
    <property type="protein sequence ID" value="AT1G55310.2"/>
    <property type="gene ID" value="AT1G55310"/>
</dbReference>
<dbReference type="Gramene" id="AT1G55310.5">
    <molecule id="Q9SEU4-4"/>
    <property type="protein sequence ID" value="AT1G55310.5"/>
    <property type="gene ID" value="AT1G55310"/>
</dbReference>
<dbReference type="KEGG" id="ath:AT1G55310"/>
<dbReference type="Araport" id="AT1G55310"/>
<dbReference type="TAIR" id="AT1G55310">
    <property type="gene designation" value="SCL33"/>
</dbReference>
<dbReference type="eggNOG" id="KOG0118">
    <property type="taxonomic scope" value="Eukaryota"/>
</dbReference>
<dbReference type="InParanoid" id="Q9SEU4"/>
<dbReference type="OMA" id="AMYSLDR"/>
<dbReference type="PhylomeDB" id="Q9SEU4"/>
<dbReference type="PRO" id="PR:Q9SEU4"/>
<dbReference type="Proteomes" id="UP000006548">
    <property type="component" value="Chromosome 1"/>
</dbReference>
<dbReference type="ExpressionAtlas" id="Q9SEU4">
    <property type="expression patterns" value="baseline and differential"/>
</dbReference>
<dbReference type="GO" id="GO:0005737">
    <property type="term" value="C:cytoplasm"/>
    <property type="evidence" value="ECO:0007669"/>
    <property type="project" value="UniProtKB-SubCell"/>
</dbReference>
<dbReference type="GO" id="GO:0035061">
    <property type="term" value="C:interchromatin granule"/>
    <property type="evidence" value="ECO:0000314"/>
    <property type="project" value="TAIR"/>
</dbReference>
<dbReference type="GO" id="GO:0016607">
    <property type="term" value="C:nuclear speck"/>
    <property type="evidence" value="ECO:0000314"/>
    <property type="project" value="TAIR"/>
</dbReference>
<dbReference type="GO" id="GO:0005730">
    <property type="term" value="C:nucleolus"/>
    <property type="evidence" value="ECO:0007005"/>
    <property type="project" value="TAIR"/>
</dbReference>
<dbReference type="GO" id="GO:0005886">
    <property type="term" value="C:plasma membrane"/>
    <property type="evidence" value="ECO:0007005"/>
    <property type="project" value="TAIR"/>
</dbReference>
<dbReference type="GO" id="GO:0005681">
    <property type="term" value="C:spliceosomal complex"/>
    <property type="evidence" value="ECO:0007669"/>
    <property type="project" value="UniProtKB-KW"/>
</dbReference>
<dbReference type="GO" id="GO:0042802">
    <property type="term" value="F:identical protein binding"/>
    <property type="evidence" value="ECO:0000353"/>
    <property type="project" value="IntAct"/>
</dbReference>
<dbReference type="GO" id="GO:0003723">
    <property type="term" value="F:RNA binding"/>
    <property type="evidence" value="ECO:0000250"/>
    <property type="project" value="TAIR"/>
</dbReference>
<dbReference type="GO" id="GO:0000398">
    <property type="term" value="P:mRNA splicing, via spliceosome"/>
    <property type="evidence" value="ECO:0000353"/>
    <property type="project" value="TAIR"/>
</dbReference>
<dbReference type="GO" id="GO:0008380">
    <property type="term" value="P:RNA splicing"/>
    <property type="evidence" value="ECO:0000303"/>
    <property type="project" value="TAIR"/>
</dbReference>
<dbReference type="FunFam" id="3.30.70.330:FF:000784">
    <property type="entry name" value="Serine/arginine-rich SC35-like splicing factor SCL30A"/>
    <property type="match status" value="1"/>
</dbReference>
<dbReference type="Gene3D" id="3.30.70.330">
    <property type="match status" value="1"/>
</dbReference>
<dbReference type="InterPro" id="IPR012677">
    <property type="entry name" value="Nucleotide-bd_a/b_plait_sf"/>
</dbReference>
<dbReference type="InterPro" id="IPR035979">
    <property type="entry name" value="RBD_domain_sf"/>
</dbReference>
<dbReference type="InterPro" id="IPR050441">
    <property type="entry name" value="RBM"/>
</dbReference>
<dbReference type="InterPro" id="IPR000504">
    <property type="entry name" value="RRM_dom"/>
</dbReference>
<dbReference type="PANTHER" id="PTHR48034">
    <property type="entry name" value="TRANSFORMER-2 SEX-DETERMINING PROTEIN-RELATED"/>
    <property type="match status" value="1"/>
</dbReference>
<dbReference type="Pfam" id="PF00076">
    <property type="entry name" value="RRM_1"/>
    <property type="match status" value="1"/>
</dbReference>
<dbReference type="SMART" id="SM00360">
    <property type="entry name" value="RRM"/>
    <property type="match status" value="1"/>
</dbReference>
<dbReference type="SUPFAM" id="SSF54928">
    <property type="entry name" value="RNA-binding domain, RBD"/>
    <property type="match status" value="1"/>
</dbReference>
<dbReference type="PROSITE" id="PS50102">
    <property type="entry name" value="RRM"/>
    <property type="match status" value="1"/>
</dbReference>
<protein>
    <recommendedName>
        <fullName>Serine/arginine-rich SC35-like splicing factor SCL33</fullName>
        <shortName>At-SCL33</shortName>
        <shortName>AtSCL33</shortName>
    </recommendedName>
    <alternativeName>
        <fullName>SC35-like splicing factor 33</fullName>
    </alternativeName>
    <alternativeName>
        <fullName>Serine/arginine-rich splicing factor 33</fullName>
    </alternativeName>
</protein>
<gene>
    <name type="primary">SCL33</name>
    <name type="synonym">SR33</name>
    <name type="ordered locus">At1g55310</name>
    <name type="ORF">F7A10.15</name>
</gene>
<comment type="function">
    <text evidence="11">Involved in intron recognition and spliceosome assembly. Binds to multiple 5'-GAAG-3' repeats found in its third intron, suggesting autoregulation of alternative splicing (PubMed:22913769). May be necessary for accurate splicing of the 3' region of introns.</text>
</comment>
<comment type="subunit">
    <text evidence="6 7 10">Component of the spliceosome. Homodimer. Interacts with AFC2, CYP59, RS2Z33, RNU1 and SR45. The interaction with AFC2 depends on phosphorylation status.</text>
</comment>
<comment type="interaction">
    <interactant intactId="EBI-927103">
        <id>Q9SEU4</id>
    </interactant>
    <interactant intactId="EBI-1792180">
        <id>P51567</id>
        <label>AFC2</label>
    </interactant>
    <organismsDiffer>false</organismsDiffer>
    <experiments>2</experiments>
</comment>
<comment type="interaction">
    <interactant intactId="EBI-927103">
        <id>Q9SEU4</id>
    </interactant>
    <interactant intactId="EBI-1625989">
        <id>Q6Q151</id>
        <label>CYP59</label>
    </interactant>
    <organismsDiffer>false</organismsDiffer>
    <experiments>3</experiments>
</comment>
<comment type="interaction">
    <interactant intactId="EBI-927103">
        <id>Q9SEU4</id>
    </interactant>
    <interactant intactId="EBI-1633812">
        <id>Q42404</id>
        <label>RNU1</label>
    </interactant>
    <organismsDiffer>false</organismsDiffer>
    <experiments>3</experiments>
</comment>
<comment type="interaction">
    <interactant intactId="EBI-927103">
        <id>Q9SEU4</id>
    </interactant>
    <interactant intactId="EBI-927103">
        <id>Q9SEU4</id>
        <label>SCL33</label>
    </interactant>
    <organismsDiffer>false</organismsDiffer>
    <experiments>3</experiments>
</comment>
<comment type="interaction">
    <interactant intactId="EBI-927103">
        <id>Q9SEU4</id>
    </interactant>
    <interactant intactId="EBI-1792008">
        <id>Q9SEE9</id>
        <label>SR45</label>
    </interactant>
    <organismsDiffer>false</organismsDiffer>
    <experiments>3</experiments>
</comment>
<comment type="subcellular location">
    <subcellularLocation>
        <location evidence="8 9">Nucleus speckle</location>
    </subcellularLocation>
    <subcellularLocation>
        <location evidence="8">Nucleus</location>
        <location evidence="8">Nucleoplasm</location>
    </subcellularLocation>
    <subcellularLocation>
        <location evidence="8">Cytoplasm</location>
    </subcellularLocation>
    <text evidence="8">Colocalizes with spliceosome components. Follows a dynamic subcellular location during the cell cycle. Distributed throughout the cell on entry into mitosis, as the nuclear envelope breaks down. In metaphase, diffusely present throughout the cytoplasm. In later telophase, as the nuclear envelope is reformed, reenters into the daughter nuclei where speckles are observed. Daughter nuclei acquire later a typical interphase spherical shape and the nucleolus gradually forms.</text>
</comment>
<comment type="alternative products">
    <event type="alternative splicing"/>
    <isoform>
        <id>Q9SEU4-1</id>
        <name>1</name>
        <sequence type="displayed"/>
    </isoform>
    <isoform>
        <id>Q9SEU4-2</id>
        <name>2</name>
        <sequence type="described" ref="VSP_044317"/>
    </isoform>
    <isoform>
        <id>Q9SEU4-3</id>
        <name>3</name>
        <sequence type="described" ref="VSP_044315 VSP_044316"/>
    </isoform>
    <isoform>
        <id>Q9SEU4-4</id>
        <name>4</name>
        <sequence type="described" ref="VSP_044318 VSP_044319"/>
    </isoform>
</comment>
<comment type="tissue specificity">
    <text evidence="6 8">Ubiquitous. Mostly expressed in roots, fruits and flowers, and, to a lower extent, in leaves.</text>
</comment>
<comment type="developmental stage">
    <text evidence="8">Near the primary root tip, expressed in the vascular bundle, endodermis, cortex, epidermis, and lateral root cap. In leaves, present in guard cells leaf epidermal pavement cells and trichomes. In flowers, high expression in the pollen grains, mostly in vegetative nuclei. Also present in sepals, petals, and young siliques. After flowering, the expression level decreases gradually.</text>
</comment>
<comment type="PTM">
    <text evidence="6">Phosphorylated by AFC2.</text>
</comment>
<comment type="disruption phenotype">
    <text evidence="11">No effect on alternative splicing, due to the redundancy with SCL30A. Scl33 and scl30a double mutant shows altered splicing.</text>
</comment>
<comment type="miscellaneous">
    <text evidence="14">The splicing pattern of the pre-mRNA is regulated in a tissue-specific manner and by development, and changes in response to various types of abiotic stresses and hormones.</text>
</comment>
<comment type="similarity">
    <text evidence="13">Belongs to the splicing factor SR family. SCL subfamily.</text>
</comment>
<comment type="sequence caution" evidence="13">
    <conflict type="erroneous gene model prediction">
        <sequence resource="EMBL-CDS" id="AAG51556"/>
    </conflict>
</comment>
<feature type="chain" id="PRO_0000419680" description="Serine/arginine-rich SC35-like splicing factor SCL33">
    <location>
        <begin position="1"/>
        <end position="287"/>
    </location>
</feature>
<feature type="domain" description="RRM" evidence="4">
    <location>
        <begin position="36"/>
        <end position="114"/>
    </location>
</feature>
<feature type="region of interest" description="Disordered" evidence="5">
    <location>
        <begin position="1"/>
        <end position="34"/>
    </location>
</feature>
<feature type="region of interest" description="Disordered" evidence="5">
    <location>
        <begin position="116"/>
        <end position="287"/>
    </location>
</feature>
<feature type="compositionally biased region" description="Basic and acidic residues" evidence="5">
    <location>
        <begin position="116"/>
        <end position="132"/>
    </location>
</feature>
<feature type="compositionally biased region" description="Basic and acidic residues" evidence="5">
    <location>
        <begin position="177"/>
        <end position="187"/>
    </location>
</feature>
<feature type="compositionally biased region" description="Basic residues" evidence="5">
    <location>
        <begin position="220"/>
        <end position="237"/>
    </location>
</feature>
<feature type="compositionally biased region" description="Basic residues" evidence="5">
    <location>
        <begin position="244"/>
        <end position="260"/>
    </location>
</feature>
<feature type="compositionally biased region" description="Basic and acidic residues" evidence="5">
    <location>
        <begin position="278"/>
        <end position="287"/>
    </location>
</feature>
<feature type="modified residue" description="Phosphoserine" evidence="1">
    <location>
        <position position="9"/>
    </location>
</feature>
<feature type="modified residue" description="Phosphoserine" evidence="1">
    <location>
        <position position="20"/>
    </location>
</feature>
<feature type="modified residue" description="Phosphoserine" evidence="3">
    <location>
        <position position="165"/>
    </location>
</feature>
<feature type="modified residue" description="Phosphoserine" evidence="3">
    <location>
        <position position="175"/>
    </location>
</feature>
<feature type="modified residue" description="Phosphoserine" evidence="3">
    <location>
        <position position="177"/>
    </location>
</feature>
<feature type="modified residue" description="Phosphoserine" evidence="1">
    <location>
        <position position="188"/>
    </location>
</feature>
<feature type="modified residue" description="Phosphoserine" evidence="1">
    <location>
        <position position="190"/>
    </location>
</feature>
<feature type="modified residue" description="Phosphoserine" evidence="1">
    <location>
        <position position="238"/>
    </location>
</feature>
<feature type="modified residue" description="Phosphoserine" evidence="1">
    <location>
        <position position="248"/>
    </location>
</feature>
<feature type="modified residue" description="Phosphoserine" evidence="2">
    <location>
        <position position="271"/>
    </location>
</feature>
<feature type="modified residue" description="Phosphoserine" evidence="2">
    <location>
        <position position="284"/>
    </location>
</feature>
<feature type="modified residue" description="Phosphoserine" evidence="2">
    <location>
        <position position="286"/>
    </location>
</feature>
<feature type="splice variant" id="VSP_044315" description="In isoform 3." evidence="13">
    <original>G</original>
    <variation>GSHLCTDTCKASR</variation>
    <location>
        <position position="74"/>
    </location>
</feature>
<feature type="splice variant" id="VSP_044316" description="In isoform 3." evidence="13">
    <original>G</original>
    <variation>GS</variation>
    <location>
        <position position="130"/>
    </location>
</feature>
<feature type="splice variant" id="VSP_044317" description="In isoform 2." evidence="12">
    <location>
        <begin position="216"/>
        <end position="239"/>
    </location>
</feature>
<feature type="splice variant" id="VSP_044318" description="In isoform 4." evidence="13">
    <original>SPRRS</original>
    <variation>TQEEA</variation>
    <location>
        <begin position="216"/>
        <end position="220"/>
    </location>
</feature>
<feature type="splice variant" id="VSP_044319" description="In isoform 4." evidence="13">
    <location>
        <begin position="221"/>
        <end position="287"/>
    </location>
</feature>
<keyword id="KW-0025">Alternative splicing</keyword>
<keyword id="KW-0963">Cytoplasm</keyword>
<keyword id="KW-0507">mRNA processing</keyword>
<keyword id="KW-0508">mRNA splicing</keyword>
<keyword id="KW-0539">Nucleus</keyword>
<keyword id="KW-0597">Phosphoprotein</keyword>
<keyword id="KW-1185">Reference proteome</keyword>
<keyword id="KW-0694">RNA-binding</keyword>
<keyword id="KW-0747">Spliceosome</keyword>
<sequence>MRGRSYTPSPPRGYGRRGRSPSPRGRYGGRSRDLPTSLLVRNLRHDCRQEDLRKSFEQFGPVKDIYLPRDYYTGDPRGFGFVQFMDPADAADAKHHMDGYLLLGRELTVVFAEENRKKPTEMRARERGGGRFRDRRRTPPRYYSRSRSPPPRRGRSRSRSGDYYSPPPRRHHPRSISPREERYDGRRSYSRSPASDGSRGRSLTPVRGKSRSLSPSPRRSISRSPRRSRSPSPKRNRSVSPRRSISRSPRRSRSPRRSRRSYTPEPARSRSQSPHGGQYDEDRSPSQ</sequence>